<dbReference type="EMBL" id="CP001618">
    <property type="protein sequence ID" value="ACQ79996.1"/>
    <property type="molecule type" value="Genomic_DNA"/>
</dbReference>
<dbReference type="RefSeq" id="WP_015882236.1">
    <property type="nucleotide sequence ID" value="NC_012669.1"/>
</dbReference>
<dbReference type="SMR" id="C5C483"/>
<dbReference type="STRING" id="471853.Bcav_1740"/>
<dbReference type="KEGG" id="bcv:Bcav_1740"/>
<dbReference type="eggNOG" id="COG0268">
    <property type="taxonomic scope" value="Bacteria"/>
</dbReference>
<dbReference type="HOGENOM" id="CLU_160655_0_1_11"/>
<dbReference type="OrthoDB" id="9807974at2"/>
<dbReference type="Proteomes" id="UP000007962">
    <property type="component" value="Chromosome"/>
</dbReference>
<dbReference type="GO" id="GO:0005829">
    <property type="term" value="C:cytosol"/>
    <property type="evidence" value="ECO:0007669"/>
    <property type="project" value="TreeGrafter"/>
</dbReference>
<dbReference type="GO" id="GO:0015935">
    <property type="term" value="C:small ribosomal subunit"/>
    <property type="evidence" value="ECO:0007669"/>
    <property type="project" value="TreeGrafter"/>
</dbReference>
<dbReference type="GO" id="GO:0070181">
    <property type="term" value="F:small ribosomal subunit rRNA binding"/>
    <property type="evidence" value="ECO:0007669"/>
    <property type="project" value="TreeGrafter"/>
</dbReference>
<dbReference type="GO" id="GO:0003735">
    <property type="term" value="F:structural constituent of ribosome"/>
    <property type="evidence" value="ECO:0007669"/>
    <property type="project" value="InterPro"/>
</dbReference>
<dbReference type="GO" id="GO:0006412">
    <property type="term" value="P:translation"/>
    <property type="evidence" value="ECO:0007669"/>
    <property type="project" value="UniProtKB-UniRule"/>
</dbReference>
<dbReference type="FunFam" id="1.20.58.110:FF:000001">
    <property type="entry name" value="30S ribosomal protein S20"/>
    <property type="match status" value="1"/>
</dbReference>
<dbReference type="Gene3D" id="1.20.58.110">
    <property type="entry name" value="Ribosomal protein S20"/>
    <property type="match status" value="1"/>
</dbReference>
<dbReference type="HAMAP" id="MF_00500">
    <property type="entry name" value="Ribosomal_bS20"/>
    <property type="match status" value="1"/>
</dbReference>
<dbReference type="InterPro" id="IPR002583">
    <property type="entry name" value="Ribosomal_bS20"/>
</dbReference>
<dbReference type="InterPro" id="IPR036510">
    <property type="entry name" value="Ribosomal_bS20_sf"/>
</dbReference>
<dbReference type="NCBIfam" id="TIGR00029">
    <property type="entry name" value="S20"/>
    <property type="match status" value="1"/>
</dbReference>
<dbReference type="PANTHER" id="PTHR33398">
    <property type="entry name" value="30S RIBOSOMAL PROTEIN S20"/>
    <property type="match status" value="1"/>
</dbReference>
<dbReference type="PANTHER" id="PTHR33398:SF1">
    <property type="entry name" value="SMALL RIBOSOMAL SUBUNIT PROTEIN BS20C"/>
    <property type="match status" value="1"/>
</dbReference>
<dbReference type="Pfam" id="PF01649">
    <property type="entry name" value="Ribosomal_S20p"/>
    <property type="match status" value="1"/>
</dbReference>
<dbReference type="SUPFAM" id="SSF46992">
    <property type="entry name" value="Ribosomal protein S20"/>
    <property type="match status" value="1"/>
</dbReference>
<gene>
    <name evidence="1" type="primary">rpsT</name>
    <name type="ordered locus">Bcav_1740</name>
</gene>
<keyword id="KW-1185">Reference proteome</keyword>
<keyword id="KW-0687">Ribonucleoprotein</keyword>
<keyword id="KW-0689">Ribosomal protein</keyword>
<keyword id="KW-0694">RNA-binding</keyword>
<keyword id="KW-0699">rRNA-binding</keyword>
<sequence length="86" mass="9525">MANIKSQIKRIRTNEKARQRNKAYKSELKTHVRKVREAVTAGDKETASDALQVASRKLDKAVSKGVIHKNQAANRKSALAKQVSGL</sequence>
<protein>
    <recommendedName>
        <fullName evidence="1">Small ribosomal subunit protein bS20</fullName>
    </recommendedName>
    <alternativeName>
        <fullName evidence="3">30S ribosomal protein S20</fullName>
    </alternativeName>
</protein>
<accession>C5C483</accession>
<organism>
    <name type="scientific">Beutenbergia cavernae (strain ATCC BAA-8 / DSM 12333 / CCUG 43141 / JCM 11478 / NBRC 16432 / NCIMB 13614 / HKI 0122)</name>
    <dbReference type="NCBI Taxonomy" id="471853"/>
    <lineage>
        <taxon>Bacteria</taxon>
        <taxon>Bacillati</taxon>
        <taxon>Actinomycetota</taxon>
        <taxon>Actinomycetes</taxon>
        <taxon>Micrococcales</taxon>
        <taxon>Beutenbergiaceae</taxon>
        <taxon>Beutenbergia</taxon>
    </lineage>
</organism>
<reference key="1">
    <citation type="journal article" date="2009" name="Stand. Genomic Sci.">
        <title>Complete genome sequence of Beutenbergia cavernae type strain (HKI 0122).</title>
        <authorList>
            <person name="Land M."/>
            <person name="Pukall R."/>
            <person name="Abt B."/>
            <person name="Goker M."/>
            <person name="Rohde M."/>
            <person name="Glavina Del Rio T."/>
            <person name="Tice H."/>
            <person name="Copeland A."/>
            <person name="Cheng J.F."/>
            <person name="Lucas S."/>
            <person name="Chen F."/>
            <person name="Nolan M."/>
            <person name="Bruce D."/>
            <person name="Goodwin L."/>
            <person name="Pitluck S."/>
            <person name="Ivanova N."/>
            <person name="Mavromatis K."/>
            <person name="Ovchinnikova G."/>
            <person name="Pati A."/>
            <person name="Chen A."/>
            <person name="Palaniappan K."/>
            <person name="Hauser L."/>
            <person name="Chang Y.J."/>
            <person name="Jefferies C.C."/>
            <person name="Saunders E."/>
            <person name="Brettin T."/>
            <person name="Detter J.C."/>
            <person name="Han C."/>
            <person name="Chain P."/>
            <person name="Bristow J."/>
            <person name="Eisen J.A."/>
            <person name="Markowitz V."/>
            <person name="Hugenholtz P."/>
            <person name="Kyrpides N.C."/>
            <person name="Klenk H.P."/>
            <person name="Lapidus A."/>
        </authorList>
    </citation>
    <scope>NUCLEOTIDE SEQUENCE [LARGE SCALE GENOMIC DNA]</scope>
    <source>
        <strain>ATCC BAA-8 / DSM 12333 / CCUG 43141 / JCM 11478 / NBRC 16432 / NCIMB 13614 / HKI 0122</strain>
    </source>
</reference>
<feature type="chain" id="PRO_1000206490" description="Small ribosomal subunit protein bS20">
    <location>
        <begin position="1"/>
        <end position="86"/>
    </location>
</feature>
<feature type="region of interest" description="Disordered" evidence="2">
    <location>
        <begin position="1"/>
        <end position="25"/>
    </location>
</feature>
<feature type="compositionally biased region" description="Basic and acidic residues" evidence="2">
    <location>
        <begin position="12"/>
        <end position="25"/>
    </location>
</feature>
<proteinExistence type="inferred from homology"/>
<evidence type="ECO:0000255" key="1">
    <source>
        <dbReference type="HAMAP-Rule" id="MF_00500"/>
    </source>
</evidence>
<evidence type="ECO:0000256" key="2">
    <source>
        <dbReference type="SAM" id="MobiDB-lite"/>
    </source>
</evidence>
<evidence type="ECO:0000305" key="3"/>
<comment type="function">
    <text evidence="1">Binds directly to 16S ribosomal RNA.</text>
</comment>
<comment type="similarity">
    <text evidence="1">Belongs to the bacterial ribosomal protein bS20 family.</text>
</comment>
<name>RS20_BEUC1</name>